<feature type="chain" id="PRO_0000280701" description="E3 ubiquitin-protein ligase RNF170">
    <location>
        <begin position="1"/>
        <end position="286"/>
    </location>
</feature>
<feature type="topological domain" description="Lumenal" evidence="1">
    <location>
        <begin position="1"/>
        <end position="52"/>
    </location>
</feature>
<feature type="transmembrane region" description="Helical" evidence="1">
    <location>
        <begin position="53"/>
        <end position="73"/>
    </location>
</feature>
<feature type="topological domain" description="Cytoplasmic" evidence="1">
    <location>
        <begin position="74"/>
        <end position="229"/>
    </location>
</feature>
<feature type="transmembrane region" description="Helical" evidence="1">
    <location>
        <begin position="230"/>
        <end position="250"/>
    </location>
</feature>
<feature type="topological domain" description="Lumenal" evidence="1">
    <location>
        <position position="251"/>
    </location>
</feature>
<feature type="transmembrane region" description="Helical" evidence="1">
    <location>
        <begin position="252"/>
        <end position="272"/>
    </location>
</feature>
<feature type="topological domain" description="Cytoplasmic" evidence="1">
    <location>
        <begin position="273"/>
        <end position="286"/>
    </location>
</feature>
<feature type="zinc finger region" description="RING-type" evidence="2">
    <location>
        <begin position="115"/>
        <end position="158"/>
    </location>
</feature>
<feature type="splice variant" id="VSP_023858" description="In isoform 2." evidence="6">
    <location>
        <begin position="28"/>
        <end position="74"/>
    </location>
</feature>
<feature type="splice variant" id="VSP_023859" description="In isoform 4." evidence="6">
    <original>GSCIIAY</original>
    <variation>VLQLFPH</variation>
    <location>
        <begin position="136"/>
        <end position="142"/>
    </location>
</feature>
<feature type="splice variant" id="VSP_023860" description="In isoform 5." evidence="5">
    <original>GSCII</original>
    <variation>ENCGF</variation>
    <location>
        <begin position="136"/>
        <end position="140"/>
    </location>
</feature>
<feature type="splice variant" id="VSP_023861" description="In isoform 3." evidence="6">
    <original>SCIIAYWRYGSWLGAISCPICRQTVTLLLTVFGEDDQSQDVIRLRQDVNDYNRRFSGQPRSIMERIMDLPTLLRHAFREV</original>
    <variation>EQIMSDLVRVTSLRPLWIGSGLDCSFSFYHIYVLRRVDCFTSPALVATQIIAYCLVYSILRSEDIAQLVECLAIMQKPWA</variation>
    <location>
        <begin position="137"/>
        <end position="216"/>
    </location>
</feature>
<feature type="splice variant" id="VSP_023862" description="In isoform 5." evidence="5">
    <location>
        <begin position="141"/>
        <end position="286"/>
    </location>
</feature>
<feature type="splice variant" id="VSP_023863" description="In isoform 4." evidence="6">
    <location>
        <begin position="143"/>
        <end position="286"/>
    </location>
</feature>
<feature type="splice variant" id="VSP_023864" description="In isoform 3." evidence="6">
    <location>
        <begin position="217"/>
        <end position="286"/>
    </location>
</feature>
<feature type="mutagenesis site" description="Loss of E3 ligase activity." evidence="3">
    <original>C</original>
    <variation>S</variation>
    <location>
        <position position="130"/>
    </location>
</feature>
<feature type="mutagenesis site" description="Loss of E3 ligase activity." evidence="3">
    <original>H</original>
    <variation>S</variation>
    <location>
        <position position="132"/>
    </location>
</feature>
<feature type="sequence conflict" description="In Ref. 1; BAC31147." evidence="7" ref="1">
    <original>A</original>
    <variation>V</variation>
    <location>
        <position position="105"/>
    </location>
</feature>
<gene>
    <name type="primary">Rnf170</name>
</gene>
<protein>
    <recommendedName>
        <fullName>E3 ubiquitin-protein ligase RNF170</fullName>
        <ecNumber>2.3.2.27</ecNumber>
    </recommendedName>
    <alternativeName>
        <fullName>RING finger protein 170</fullName>
    </alternativeName>
    <alternativeName>
        <fullName evidence="7">RING-type E3 ubiquitin transferase RNF170</fullName>
    </alternativeName>
</protein>
<organism>
    <name type="scientific">Mus musculus</name>
    <name type="common">Mouse</name>
    <dbReference type="NCBI Taxonomy" id="10090"/>
    <lineage>
        <taxon>Eukaryota</taxon>
        <taxon>Metazoa</taxon>
        <taxon>Chordata</taxon>
        <taxon>Craniata</taxon>
        <taxon>Vertebrata</taxon>
        <taxon>Euteleostomi</taxon>
        <taxon>Mammalia</taxon>
        <taxon>Eutheria</taxon>
        <taxon>Euarchontoglires</taxon>
        <taxon>Glires</taxon>
        <taxon>Rodentia</taxon>
        <taxon>Myomorpha</taxon>
        <taxon>Muroidea</taxon>
        <taxon>Muridae</taxon>
        <taxon>Murinae</taxon>
        <taxon>Mus</taxon>
        <taxon>Mus</taxon>
    </lineage>
</organism>
<accession>Q8CBG9</accession>
<accession>A6H618</accession>
<accession>Q3U796</accession>
<accession>Q78QX6</accession>
<accession>Q8C8S1</accession>
<accession>Q8C9I0</accession>
<accession>Q8K0H6</accession>
<reference key="1">
    <citation type="journal article" date="2005" name="Science">
        <title>The transcriptional landscape of the mammalian genome.</title>
        <authorList>
            <person name="Carninci P."/>
            <person name="Kasukawa T."/>
            <person name="Katayama S."/>
            <person name="Gough J."/>
            <person name="Frith M.C."/>
            <person name="Maeda N."/>
            <person name="Oyama R."/>
            <person name="Ravasi T."/>
            <person name="Lenhard B."/>
            <person name="Wells C."/>
            <person name="Kodzius R."/>
            <person name="Shimokawa K."/>
            <person name="Bajic V.B."/>
            <person name="Brenner S.E."/>
            <person name="Batalov S."/>
            <person name="Forrest A.R."/>
            <person name="Zavolan M."/>
            <person name="Davis M.J."/>
            <person name="Wilming L.G."/>
            <person name="Aidinis V."/>
            <person name="Allen J.E."/>
            <person name="Ambesi-Impiombato A."/>
            <person name="Apweiler R."/>
            <person name="Aturaliya R.N."/>
            <person name="Bailey T.L."/>
            <person name="Bansal M."/>
            <person name="Baxter L."/>
            <person name="Beisel K.W."/>
            <person name="Bersano T."/>
            <person name="Bono H."/>
            <person name="Chalk A.M."/>
            <person name="Chiu K.P."/>
            <person name="Choudhary V."/>
            <person name="Christoffels A."/>
            <person name="Clutterbuck D.R."/>
            <person name="Crowe M.L."/>
            <person name="Dalla E."/>
            <person name="Dalrymple B.P."/>
            <person name="de Bono B."/>
            <person name="Della Gatta G."/>
            <person name="di Bernardo D."/>
            <person name="Down T."/>
            <person name="Engstrom P."/>
            <person name="Fagiolini M."/>
            <person name="Faulkner G."/>
            <person name="Fletcher C.F."/>
            <person name="Fukushima T."/>
            <person name="Furuno M."/>
            <person name="Futaki S."/>
            <person name="Gariboldi M."/>
            <person name="Georgii-Hemming P."/>
            <person name="Gingeras T.R."/>
            <person name="Gojobori T."/>
            <person name="Green R.E."/>
            <person name="Gustincich S."/>
            <person name="Harbers M."/>
            <person name="Hayashi Y."/>
            <person name="Hensch T.K."/>
            <person name="Hirokawa N."/>
            <person name="Hill D."/>
            <person name="Huminiecki L."/>
            <person name="Iacono M."/>
            <person name="Ikeo K."/>
            <person name="Iwama A."/>
            <person name="Ishikawa T."/>
            <person name="Jakt M."/>
            <person name="Kanapin A."/>
            <person name="Katoh M."/>
            <person name="Kawasawa Y."/>
            <person name="Kelso J."/>
            <person name="Kitamura H."/>
            <person name="Kitano H."/>
            <person name="Kollias G."/>
            <person name="Krishnan S.P."/>
            <person name="Kruger A."/>
            <person name="Kummerfeld S.K."/>
            <person name="Kurochkin I.V."/>
            <person name="Lareau L.F."/>
            <person name="Lazarevic D."/>
            <person name="Lipovich L."/>
            <person name="Liu J."/>
            <person name="Liuni S."/>
            <person name="McWilliam S."/>
            <person name="Madan Babu M."/>
            <person name="Madera M."/>
            <person name="Marchionni L."/>
            <person name="Matsuda H."/>
            <person name="Matsuzawa S."/>
            <person name="Miki H."/>
            <person name="Mignone F."/>
            <person name="Miyake S."/>
            <person name="Morris K."/>
            <person name="Mottagui-Tabar S."/>
            <person name="Mulder N."/>
            <person name="Nakano N."/>
            <person name="Nakauchi H."/>
            <person name="Ng P."/>
            <person name="Nilsson R."/>
            <person name="Nishiguchi S."/>
            <person name="Nishikawa S."/>
            <person name="Nori F."/>
            <person name="Ohara O."/>
            <person name="Okazaki Y."/>
            <person name="Orlando V."/>
            <person name="Pang K.C."/>
            <person name="Pavan W.J."/>
            <person name="Pavesi G."/>
            <person name="Pesole G."/>
            <person name="Petrovsky N."/>
            <person name="Piazza S."/>
            <person name="Reed J."/>
            <person name="Reid J.F."/>
            <person name="Ring B.Z."/>
            <person name="Ringwald M."/>
            <person name="Rost B."/>
            <person name="Ruan Y."/>
            <person name="Salzberg S.L."/>
            <person name="Sandelin A."/>
            <person name="Schneider C."/>
            <person name="Schoenbach C."/>
            <person name="Sekiguchi K."/>
            <person name="Semple C.A."/>
            <person name="Seno S."/>
            <person name="Sessa L."/>
            <person name="Sheng Y."/>
            <person name="Shibata Y."/>
            <person name="Shimada H."/>
            <person name="Shimada K."/>
            <person name="Silva D."/>
            <person name="Sinclair B."/>
            <person name="Sperling S."/>
            <person name="Stupka E."/>
            <person name="Sugiura K."/>
            <person name="Sultana R."/>
            <person name="Takenaka Y."/>
            <person name="Taki K."/>
            <person name="Tammoja K."/>
            <person name="Tan S.L."/>
            <person name="Tang S."/>
            <person name="Taylor M.S."/>
            <person name="Tegner J."/>
            <person name="Teichmann S.A."/>
            <person name="Ueda H.R."/>
            <person name="van Nimwegen E."/>
            <person name="Verardo R."/>
            <person name="Wei C.L."/>
            <person name="Yagi K."/>
            <person name="Yamanishi H."/>
            <person name="Zabarovsky E."/>
            <person name="Zhu S."/>
            <person name="Zimmer A."/>
            <person name="Hide W."/>
            <person name="Bult C."/>
            <person name="Grimmond S.M."/>
            <person name="Teasdale R.D."/>
            <person name="Liu E.T."/>
            <person name="Brusic V."/>
            <person name="Quackenbush J."/>
            <person name="Wahlestedt C."/>
            <person name="Mattick J.S."/>
            <person name="Hume D.A."/>
            <person name="Kai C."/>
            <person name="Sasaki D."/>
            <person name="Tomaru Y."/>
            <person name="Fukuda S."/>
            <person name="Kanamori-Katayama M."/>
            <person name="Suzuki M."/>
            <person name="Aoki J."/>
            <person name="Arakawa T."/>
            <person name="Iida J."/>
            <person name="Imamura K."/>
            <person name="Itoh M."/>
            <person name="Kato T."/>
            <person name="Kawaji H."/>
            <person name="Kawagashira N."/>
            <person name="Kawashima T."/>
            <person name="Kojima M."/>
            <person name="Kondo S."/>
            <person name="Konno H."/>
            <person name="Nakano K."/>
            <person name="Ninomiya N."/>
            <person name="Nishio T."/>
            <person name="Okada M."/>
            <person name="Plessy C."/>
            <person name="Shibata K."/>
            <person name="Shiraki T."/>
            <person name="Suzuki S."/>
            <person name="Tagami M."/>
            <person name="Waki K."/>
            <person name="Watahiki A."/>
            <person name="Okamura-Oho Y."/>
            <person name="Suzuki H."/>
            <person name="Kawai J."/>
            <person name="Hayashizaki Y."/>
        </authorList>
    </citation>
    <scope>NUCLEOTIDE SEQUENCE [LARGE SCALE MRNA] (ISOFORMS 1; 2; 3 AND 4)</scope>
    <source>
        <strain>C57BL/6J</strain>
        <tissue>Bone marrow</tissue>
        <tissue>Brain cortex</tissue>
        <tissue>Cerebellum</tissue>
        <tissue>Retina</tissue>
        <tissue>Thymus</tissue>
    </source>
</reference>
<reference key="2">
    <citation type="submission" date="2005-09" db="EMBL/GenBank/DDBJ databases">
        <authorList>
            <person name="Mural R.J."/>
            <person name="Adams M.D."/>
            <person name="Myers E.W."/>
            <person name="Smith H.O."/>
            <person name="Venter J.C."/>
        </authorList>
    </citation>
    <scope>NUCLEOTIDE SEQUENCE [LARGE SCALE GENOMIC DNA]</scope>
</reference>
<reference key="3">
    <citation type="journal article" date="2004" name="Genome Res.">
        <title>The status, quality, and expansion of the NIH full-length cDNA project: the Mammalian Gene Collection (MGC).</title>
        <authorList>
            <consortium name="The MGC Project Team"/>
        </authorList>
    </citation>
    <scope>NUCLEOTIDE SEQUENCE [LARGE SCALE MRNA] (ISOFORMS 1 AND 5)</scope>
    <source>
        <strain>FVB/N</strain>
        <tissue>Mammary tumor</tissue>
        <tissue>Olfactory epithelium</tissue>
    </source>
</reference>
<reference key="4">
    <citation type="journal article" date="2011" name="J. Biol. Chem.">
        <title>RNF170 protein, an endoplasmic reticulum membrane ubiquitin ligase, mediates inositol 1,4,5-trisphosphate receptor ubiquitination and degradation.</title>
        <authorList>
            <person name="Lu J.P."/>
            <person name="Wang Y."/>
            <person name="Sliter D.A."/>
            <person name="Pearce M.M."/>
            <person name="Wojcikiewicz R.J."/>
        </authorList>
    </citation>
    <scope>FUNCTION</scope>
    <scope>INTERACTION WITH ERLIN1/ERLIN2 COMPLEX AND ITPR1</scope>
    <scope>SUBCELLULAR LOCATION</scope>
    <scope>MUTAGENESIS OF CYS-130 AND HIS-132</scope>
</reference>
<reference key="5">
    <citation type="journal article" date="2020" name="Cell. Mol. Immunol.">
        <title>E3 ubiquitin ligase RNF170 inhibits innate immune responses by targeting and degrading TLR3 in murine cells.</title>
        <authorList>
            <person name="Song X."/>
            <person name="Liu S."/>
            <person name="Wang W."/>
            <person name="Ma Z."/>
            <person name="Cao X."/>
            <person name="Jiang M."/>
        </authorList>
    </citation>
    <scope>FUNCTION</scope>
    <scope>DISRUPTION PHENOTYPE</scope>
</reference>
<keyword id="KW-0025">Alternative splicing</keyword>
<keyword id="KW-0256">Endoplasmic reticulum</keyword>
<keyword id="KW-0472">Membrane</keyword>
<keyword id="KW-0479">Metal-binding</keyword>
<keyword id="KW-1185">Reference proteome</keyword>
<keyword id="KW-0808">Transferase</keyword>
<keyword id="KW-0812">Transmembrane</keyword>
<keyword id="KW-1133">Transmembrane helix</keyword>
<keyword id="KW-0833">Ubl conjugation pathway</keyword>
<keyword id="KW-0862">Zinc</keyword>
<keyword id="KW-0863">Zinc-finger</keyword>
<dbReference type="EC" id="2.3.2.27"/>
<dbReference type="EMBL" id="AK036051">
    <property type="protein sequence ID" value="BAC29287.1"/>
    <property type="molecule type" value="mRNA"/>
</dbReference>
<dbReference type="EMBL" id="AK042063">
    <property type="protein sequence ID" value="BAC31147.1"/>
    <property type="molecule type" value="mRNA"/>
</dbReference>
<dbReference type="EMBL" id="AK044579">
    <property type="protein sequence ID" value="BAC31988.1"/>
    <property type="molecule type" value="mRNA"/>
</dbReference>
<dbReference type="EMBL" id="AK080591">
    <property type="protein sequence ID" value="BAC37951.1"/>
    <property type="molecule type" value="mRNA"/>
</dbReference>
<dbReference type="EMBL" id="AK152760">
    <property type="protein sequence ID" value="BAE31474.1"/>
    <property type="molecule type" value="mRNA"/>
</dbReference>
<dbReference type="EMBL" id="CH466580">
    <property type="protein sequence ID" value="EDL32805.1"/>
    <property type="molecule type" value="Genomic_DNA"/>
</dbReference>
<dbReference type="EMBL" id="BC031383">
    <property type="protein sequence ID" value="AAH31383.1"/>
    <property type="molecule type" value="mRNA"/>
</dbReference>
<dbReference type="EMBL" id="BC114210">
    <property type="protein sequence ID" value="AAI14211.1"/>
    <property type="molecule type" value="mRNA"/>
</dbReference>
<dbReference type="EMBL" id="BC138930">
    <property type="protein sequence ID" value="AAI38931.1"/>
    <property type="molecule type" value="mRNA"/>
</dbReference>
<dbReference type="EMBL" id="BC145718">
    <property type="protein sequence ID" value="AAI45719.1"/>
    <property type="molecule type" value="mRNA"/>
</dbReference>
<dbReference type="CCDS" id="CCDS90380.1">
    <molecule id="Q8CBG9-2"/>
</dbReference>
<dbReference type="RefSeq" id="NP_001344221.1">
    <molecule id="Q8CBG9-2"/>
    <property type="nucleotide sequence ID" value="NM_001357292.1"/>
</dbReference>
<dbReference type="RefSeq" id="NP_084241.1">
    <property type="nucleotide sequence ID" value="NM_029965.2"/>
</dbReference>
<dbReference type="RefSeq" id="XP_006509278.1">
    <property type="nucleotide sequence ID" value="XM_006509215.3"/>
</dbReference>
<dbReference type="RefSeq" id="XP_006509279.1">
    <property type="nucleotide sequence ID" value="XM_006509216.3"/>
</dbReference>
<dbReference type="RefSeq" id="XP_006509280.1">
    <property type="nucleotide sequence ID" value="XM_006509217.3"/>
</dbReference>
<dbReference type="RefSeq" id="XP_006509281.1">
    <property type="nucleotide sequence ID" value="XM_006509218.3"/>
</dbReference>
<dbReference type="BioGRID" id="218881">
    <property type="interactions" value="4"/>
</dbReference>
<dbReference type="FunCoup" id="Q8CBG9">
    <property type="interactions" value="108"/>
</dbReference>
<dbReference type="STRING" id="10090.ENSMUSP00000014022"/>
<dbReference type="PhosphoSitePlus" id="Q8CBG9"/>
<dbReference type="SwissPalm" id="Q8CBG9"/>
<dbReference type="PaxDb" id="10090-ENSMUSP00000014022"/>
<dbReference type="PeptideAtlas" id="Q8CBG9"/>
<dbReference type="ProteomicsDB" id="300445">
    <molecule id="Q8CBG9-1"/>
</dbReference>
<dbReference type="ProteomicsDB" id="300446">
    <molecule id="Q8CBG9-2"/>
</dbReference>
<dbReference type="ProteomicsDB" id="300447">
    <molecule id="Q8CBG9-3"/>
</dbReference>
<dbReference type="ProteomicsDB" id="300448">
    <molecule id="Q8CBG9-4"/>
</dbReference>
<dbReference type="Pumba" id="Q8CBG9"/>
<dbReference type="DNASU" id="77733"/>
<dbReference type="Ensembl" id="ENSMUST00000014022.15">
    <molecule id="Q8CBG9-1"/>
    <property type="protein sequence ID" value="ENSMUSP00000014022.9"/>
    <property type="gene ID" value="ENSMUSG00000013878.19"/>
</dbReference>
<dbReference type="Ensembl" id="ENSMUST00000110575.8">
    <molecule id="Q8CBG9-3"/>
    <property type="protein sequence ID" value="ENSMUSP00000106204.2"/>
    <property type="gene ID" value="ENSMUSG00000013878.19"/>
</dbReference>
<dbReference type="Ensembl" id="ENSMUST00000110579.10">
    <molecule id="Q8CBG9-5"/>
    <property type="protein sequence ID" value="ENSMUSP00000106208.3"/>
    <property type="gene ID" value="ENSMUSG00000013878.19"/>
</dbReference>
<dbReference type="Ensembl" id="ENSMUST00000153528.8">
    <molecule id="Q8CBG9-2"/>
    <property type="protein sequence ID" value="ENSMUSP00000118689.2"/>
    <property type="gene ID" value="ENSMUSG00000013878.19"/>
</dbReference>
<dbReference type="Ensembl" id="ENSMUST00000209300.2">
    <molecule id="Q8CBG9-4"/>
    <property type="protein sequence ID" value="ENSMUSP00000147842.2"/>
    <property type="gene ID" value="ENSMUSG00000013878.19"/>
</dbReference>
<dbReference type="GeneID" id="77733"/>
<dbReference type="KEGG" id="mmu:77733"/>
<dbReference type="UCSC" id="uc009lhl.1">
    <molecule id="Q8CBG9-3"/>
    <property type="organism name" value="mouse"/>
</dbReference>
<dbReference type="UCSC" id="uc009lhm.1">
    <molecule id="Q8CBG9-1"/>
    <property type="organism name" value="mouse"/>
</dbReference>
<dbReference type="UCSC" id="uc009lhp.1">
    <molecule id="Q8CBG9-2"/>
    <property type="organism name" value="mouse"/>
</dbReference>
<dbReference type="AGR" id="MGI:1924983"/>
<dbReference type="CTD" id="81790"/>
<dbReference type="MGI" id="MGI:1924983">
    <property type="gene designation" value="Rnf170"/>
</dbReference>
<dbReference type="VEuPathDB" id="HostDB:ENSMUSG00000013878"/>
<dbReference type="eggNOG" id="KOG2164">
    <property type="taxonomic scope" value="Eukaryota"/>
</dbReference>
<dbReference type="GeneTree" id="ENSGT00390000017123"/>
<dbReference type="HOGENOM" id="CLU_072335_0_0_1"/>
<dbReference type="InParanoid" id="Q8CBG9"/>
<dbReference type="OMA" id="CRQEEQN"/>
<dbReference type="OrthoDB" id="9049620at2759"/>
<dbReference type="PhylomeDB" id="Q8CBG9"/>
<dbReference type="TreeFam" id="TF328342"/>
<dbReference type="UniPathway" id="UPA00143"/>
<dbReference type="BioGRID-ORCS" id="77733">
    <property type="hits" value="0 hits in 77 CRISPR screens"/>
</dbReference>
<dbReference type="ChiTaRS" id="Rnf170">
    <property type="organism name" value="mouse"/>
</dbReference>
<dbReference type="PRO" id="PR:Q8CBG9"/>
<dbReference type="Proteomes" id="UP000000589">
    <property type="component" value="Chromosome 8"/>
</dbReference>
<dbReference type="RNAct" id="Q8CBG9">
    <property type="molecule type" value="protein"/>
</dbReference>
<dbReference type="Bgee" id="ENSMUSG00000013878">
    <property type="expression patterns" value="Expressed in secondary oocyte and 229 other cell types or tissues"/>
</dbReference>
<dbReference type="ExpressionAtlas" id="Q8CBG9">
    <property type="expression patterns" value="baseline and differential"/>
</dbReference>
<dbReference type="GO" id="GO:0005789">
    <property type="term" value="C:endoplasmic reticulum membrane"/>
    <property type="evidence" value="ECO:0007669"/>
    <property type="project" value="UniProtKB-SubCell"/>
</dbReference>
<dbReference type="GO" id="GO:0061630">
    <property type="term" value="F:ubiquitin protein ligase activity"/>
    <property type="evidence" value="ECO:0000314"/>
    <property type="project" value="MGI"/>
</dbReference>
<dbReference type="GO" id="GO:0008270">
    <property type="term" value="F:zinc ion binding"/>
    <property type="evidence" value="ECO:0007669"/>
    <property type="project" value="UniProtKB-KW"/>
</dbReference>
<dbReference type="GO" id="GO:0007628">
    <property type="term" value="P:adult walking behavior"/>
    <property type="evidence" value="ECO:0000315"/>
    <property type="project" value="MGI"/>
</dbReference>
<dbReference type="GO" id="GO:0010467">
    <property type="term" value="P:gene expression"/>
    <property type="evidence" value="ECO:0000315"/>
    <property type="project" value="MGI"/>
</dbReference>
<dbReference type="GO" id="GO:0045087">
    <property type="term" value="P:innate immune response"/>
    <property type="evidence" value="ECO:0000315"/>
    <property type="project" value="MGI"/>
</dbReference>
<dbReference type="GO" id="GO:0019230">
    <property type="term" value="P:proprioception"/>
    <property type="evidence" value="ECO:0000250"/>
    <property type="project" value="MGI"/>
</dbReference>
<dbReference type="GO" id="GO:0010498">
    <property type="term" value="P:proteasomal protein catabolic process"/>
    <property type="evidence" value="ECO:0000315"/>
    <property type="project" value="MGI"/>
</dbReference>
<dbReference type="GO" id="GO:0043161">
    <property type="term" value="P:proteasome-mediated ubiquitin-dependent protein catabolic process"/>
    <property type="evidence" value="ECO:0000314"/>
    <property type="project" value="MGI"/>
</dbReference>
<dbReference type="GO" id="GO:0030163">
    <property type="term" value="P:protein catabolic process"/>
    <property type="evidence" value="ECO:0000315"/>
    <property type="project" value="MGI"/>
</dbReference>
<dbReference type="GO" id="GO:0070936">
    <property type="term" value="P:protein K48-linked ubiquitination"/>
    <property type="evidence" value="ECO:0000314"/>
    <property type="project" value="MGI"/>
</dbReference>
<dbReference type="GO" id="GO:0000209">
    <property type="term" value="P:protein polyubiquitination"/>
    <property type="evidence" value="ECO:0000314"/>
    <property type="project" value="MGI"/>
</dbReference>
<dbReference type="GO" id="GO:0014823">
    <property type="term" value="P:response to activity"/>
    <property type="evidence" value="ECO:0000315"/>
    <property type="project" value="MGI"/>
</dbReference>
<dbReference type="GO" id="GO:0009266">
    <property type="term" value="P:response to temperature stimulus"/>
    <property type="evidence" value="ECO:0000315"/>
    <property type="project" value="MGI"/>
</dbReference>
<dbReference type="GO" id="GO:0019233">
    <property type="term" value="P:sensory perception of pain"/>
    <property type="evidence" value="ECO:0000250"/>
    <property type="project" value="MGI"/>
</dbReference>
<dbReference type="GO" id="GO:0034138">
    <property type="term" value="P:toll-like receptor 3 signaling pathway"/>
    <property type="evidence" value="ECO:0000315"/>
    <property type="project" value="MGI"/>
</dbReference>
<dbReference type="GO" id="GO:0090659">
    <property type="term" value="P:walking behavior"/>
    <property type="evidence" value="ECO:0000315"/>
    <property type="project" value="MGI"/>
</dbReference>
<dbReference type="CDD" id="cd16553">
    <property type="entry name" value="RING-HC_RNF170"/>
    <property type="match status" value="1"/>
</dbReference>
<dbReference type="Gene3D" id="3.30.40.10">
    <property type="entry name" value="Zinc/RING finger domain, C3HC4 (zinc finger)"/>
    <property type="match status" value="1"/>
</dbReference>
<dbReference type="InterPro" id="IPR010652">
    <property type="entry name" value="DUF1232"/>
</dbReference>
<dbReference type="InterPro" id="IPR038896">
    <property type="entry name" value="RNF170"/>
</dbReference>
<dbReference type="InterPro" id="IPR027370">
    <property type="entry name" value="Znf-RING_euk"/>
</dbReference>
<dbReference type="InterPro" id="IPR001841">
    <property type="entry name" value="Znf_RING"/>
</dbReference>
<dbReference type="InterPro" id="IPR013083">
    <property type="entry name" value="Znf_RING/FYVE/PHD"/>
</dbReference>
<dbReference type="InterPro" id="IPR017907">
    <property type="entry name" value="Znf_RING_CS"/>
</dbReference>
<dbReference type="PANTHER" id="PTHR22894:SF1">
    <property type="entry name" value="E3 UBIQUITIN-PROTEIN LIGASE RNF170"/>
    <property type="match status" value="1"/>
</dbReference>
<dbReference type="PANTHER" id="PTHR22894">
    <property type="entry name" value="RING-TYPE DOMAIN-CONTAINING PROTEIN"/>
    <property type="match status" value="1"/>
</dbReference>
<dbReference type="Pfam" id="PF06803">
    <property type="entry name" value="DUF1232"/>
    <property type="match status" value="1"/>
</dbReference>
<dbReference type="Pfam" id="PF13445">
    <property type="entry name" value="zf-RING_UBOX"/>
    <property type="match status" value="1"/>
</dbReference>
<dbReference type="SMART" id="SM00184">
    <property type="entry name" value="RING"/>
    <property type="match status" value="1"/>
</dbReference>
<dbReference type="SUPFAM" id="SSF57850">
    <property type="entry name" value="RING/U-box"/>
    <property type="match status" value="1"/>
</dbReference>
<dbReference type="PROSITE" id="PS00518">
    <property type="entry name" value="ZF_RING_1"/>
    <property type="match status" value="1"/>
</dbReference>
<dbReference type="PROSITE" id="PS50089">
    <property type="entry name" value="ZF_RING_2"/>
    <property type="match status" value="1"/>
</dbReference>
<evidence type="ECO:0000255" key="1"/>
<evidence type="ECO:0000255" key="2">
    <source>
        <dbReference type="PROSITE-ProRule" id="PRU00175"/>
    </source>
</evidence>
<evidence type="ECO:0000269" key="3">
    <source>
    </source>
</evidence>
<evidence type="ECO:0000269" key="4">
    <source>
    </source>
</evidence>
<evidence type="ECO:0000303" key="5">
    <source>
    </source>
</evidence>
<evidence type="ECO:0000303" key="6">
    <source>
    </source>
</evidence>
<evidence type="ECO:0000305" key="7"/>
<proteinExistence type="evidence at protein level"/>
<name>RN170_MOUSE</name>
<sequence length="286" mass="33414">MQRYWRFQDNKIQDICFGVLGESWIQRPVMARYYSEGQSLQQDDSFIEGVSDQVLVAVVVSLALTATLLYALLRNVQQNIHPENQELVRVLREQFQTEQDVPAPARQQFYTEMYCPICLHQASFPVETNCGHLFCGSCIIAYWRYGSWLGAISCPICRQTVTLLLTVFGEDDQSQDVIRLRQDVNDYNRRFSGQPRSIMERIMDLPTLLRHAFREVFSVGGLFWMFRIRIMLCLMGAFFYLISPLDFVPEALFGILGFLDDFFVIFLLLIYISIMYREVITQRLTR</sequence>
<comment type="function">
    <text evidence="3 4">E3 ubiquitin-protein ligase that plays an essential role in stimulus-induced inositol 1,4,5-trisphosphate receptor type 1 (ITPR1) ubiquitination and degradation via the endoplasmic reticulum-associated degradation (ERAD) pathway. Also involved in ITPR1 turnover in resting cells. Selectively inhibits the TLR3-triggered innate immune response by promoting the 'Lys-48'-linked polyubiquitination and degradation of TLR3 (PubMed:31076723).</text>
</comment>
<comment type="catalytic activity">
    <reaction>
        <text>S-ubiquitinyl-[E2 ubiquitin-conjugating enzyme]-L-cysteine + [acceptor protein]-L-lysine = [E2 ubiquitin-conjugating enzyme]-L-cysteine + N(6)-ubiquitinyl-[acceptor protein]-L-lysine.</text>
        <dbReference type="EC" id="2.3.2.27"/>
    </reaction>
</comment>
<comment type="pathway">
    <text>Protein modification; protein ubiquitination.</text>
</comment>
<comment type="subunit">
    <text evidence="3">Constitutively associated with the ERLIN1/ERLIN 2 complex. Interacts with activated ITPR1.</text>
</comment>
<comment type="subcellular location">
    <subcellularLocation>
        <location evidence="3">Endoplasmic reticulum membrane</location>
        <topology evidence="3">Multi-pass membrane protein</topology>
    </subcellularLocation>
</comment>
<comment type="alternative products">
    <event type="alternative splicing"/>
    <isoform>
        <id>Q8CBG9-1</id>
        <name>1</name>
        <sequence type="displayed"/>
    </isoform>
    <isoform>
        <id>Q8CBG9-2</id>
        <name>2</name>
        <sequence type="described" ref="VSP_023858"/>
    </isoform>
    <isoform>
        <id>Q8CBG9-3</id>
        <name>3</name>
        <sequence type="described" ref="VSP_023861 VSP_023864"/>
    </isoform>
    <isoform>
        <id>Q8CBG9-4</id>
        <name>4</name>
        <sequence type="described" ref="VSP_023859 VSP_023863"/>
    </isoform>
    <isoform>
        <id>Q8CBG9-5</id>
        <name>5</name>
        <sequence type="described" ref="VSP_023860 VSP_023862"/>
    </isoform>
</comment>
<comment type="disruption phenotype">
    <text evidence="4">RNF170 deletion mice show increased expression of type I IFNs and proinflammatory cytokines (IL6 and TNF) in peritoneal macrophages. The mRNA levels of type I IFNs and proinflammatory cytokines in the heart and brain are also significantly higher.</text>
</comment>
<comment type="caution">
    <text evidence="7">It is uncertain whether Met-1 or Met-30 is the initiator. Initiation at Met-30 is supported by sequence similarity with mammalian orthologs and by a Kozak context more favorable compared to that at Met-1.</text>
</comment>